<reference key="1">
    <citation type="journal article" date="2003" name="Cladistics">
        <title>Phylogenetics of Sigmodontinae (Rodentia, Muroidea, Cricetidae), with special reference to the akodont group, and with additional comments on historical biogeography.</title>
        <authorList>
            <person name="D'Elia G."/>
        </authorList>
    </citation>
    <scope>NUCLEOTIDE SEQUENCE [GENOMIC DNA]</scope>
</reference>
<reference key="2">
    <citation type="journal article" date="2003" name="Mamm. Biol.">
        <title>Phylogenetic analysis of sigmodontine rodents (Muroidea), with special reference to the akodont genus Deltamys.</title>
        <authorList>
            <person name="D'Elia G."/>
            <person name="Gonzalez E.M."/>
            <person name="Pardinas U.F.J."/>
        </authorList>
    </citation>
    <scope>NUCLEOTIDE SEQUENCE [GENOMIC DNA]</scope>
</reference>
<keyword id="KW-0249">Electron transport</keyword>
<keyword id="KW-0349">Heme</keyword>
<keyword id="KW-0408">Iron</keyword>
<keyword id="KW-0472">Membrane</keyword>
<keyword id="KW-0479">Metal-binding</keyword>
<keyword id="KW-0496">Mitochondrion</keyword>
<keyword id="KW-0999">Mitochondrion inner membrane</keyword>
<keyword id="KW-0679">Respiratory chain</keyword>
<keyword id="KW-0812">Transmembrane</keyword>
<keyword id="KW-1133">Transmembrane helix</keyword>
<keyword id="KW-0813">Transport</keyword>
<keyword id="KW-0830">Ubiquinone</keyword>
<comment type="function">
    <text evidence="2">Component of the ubiquinol-cytochrome c reductase complex (complex III or cytochrome b-c1 complex) that is part of the mitochondrial respiratory chain. The b-c1 complex mediates electron transfer from ubiquinol to cytochrome c. Contributes to the generation of a proton gradient across the mitochondrial membrane that is then used for ATP synthesis.</text>
</comment>
<comment type="cofactor">
    <cofactor evidence="2">
        <name>heme b</name>
        <dbReference type="ChEBI" id="CHEBI:60344"/>
    </cofactor>
    <text evidence="2">Binds 2 heme b groups non-covalently.</text>
</comment>
<comment type="subunit">
    <text evidence="2">The cytochrome bc1 complex contains 11 subunits: 3 respiratory subunits (MT-CYB, CYC1 and UQCRFS1), 2 core proteins (UQCRC1 and UQCRC2) and 6 low-molecular weight proteins (UQCRH/QCR6, UQCRB/QCR7, UQCRQ/QCR8, UQCR10/QCR9, UQCR11/QCR10 and a cleavage product of UQCRFS1). This cytochrome bc1 complex then forms a dimer.</text>
</comment>
<comment type="subcellular location">
    <subcellularLocation>
        <location evidence="2">Mitochondrion inner membrane</location>
        <topology evidence="2">Multi-pass membrane protein</topology>
    </subcellularLocation>
</comment>
<comment type="miscellaneous">
    <text evidence="1">Heme 1 (or BL or b562) is low-potential and absorbs at about 562 nm, and heme 2 (or BH or b566) is high-potential and absorbs at about 566 nm.</text>
</comment>
<comment type="similarity">
    <text evidence="3 4">Belongs to the cytochrome b family.</text>
</comment>
<comment type="caution">
    <text evidence="2">The full-length protein contains only eight transmembrane helices, not nine as predicted by bioinformatics tools.</text>
</comment>
<organism>
    <name type="scientific">Akodon montensis</name>
    <name type="common">Montane grass mouse</name>
    <dbReference type="NCBI Taxonomy" id="106112"/>
    <lineage>
        <taxon>Eukaryota</taxon>
        <taxon>Metazoa</taxon>
        <taxon>Chordata</taxon>
        <taxon>Craniata</taxon>
        <taxon>Vertebrata</taxon>
        <taxon>Euteleostomi</taxon>
        <taxon>Mammalia</taxon>
        <taxon>Eutheria</taxon>
        <taxon>Euarchontoglires</taxon>
        <taxon>Glires</taxon>
        <taxon>Rodentia</taxon>
        <taxon>Myomorpha</taxon>
        <taxon>Muroidea</taxon>
        <taxon>Cricetidae</taxon>
        <taxon>Sigmodontinae</taxon>
        <taxon>Akodon</taxon>
    </lineage>
</organism>
<gene>
    <name type="primary">MT-CYB</name>
    <name type="synonym">COB</name>
    <name type="synonym">CYTB</name>
    <name type="synonym">MTCYB</name>
</gene>
<geneLocation type="mitochondrion"/>
<feature type="chain" id="PRO_0000255561" description="Cytochrome b">
    <location>
        <begin position="1"/>
        <end position="379"/>
    </location>
</feature>
<feature type="transmembrane region" description="Helical" evidence="2">
    <location>
        <begin position="33"/>
        <end position="53"/>
    </location>
</feature>
<feature type="transmembrane region" description="Helical" evidence="2">
    <location>
        <begin position="77"/>
        <end position="98"/>
    </location>
</feature>
<feature type="transmembrane region" description="Helical" evidence="2">
    <location>
        <begin position="113"/>
        <end position="133"/>
    </location>
</feature>
<feature type="transmembrane region" description="Helical" evidence="2">
    <location>
        <begin position="178"/>
        <end position="198"/>
    </location>
</feature>
<feature type="transmembrane region" description="Helical" evidence="2">
    <location>
        <begin position="226"/>
        <end position="246"/>
    </location>
</feature>
<feature type="transmembrane region" description="Helical" evidence="2">
    <location>
        <begin position="288"/>
        <end position="308"/>
    </location>
</feature>
<feature type="transmembrane region" description="Helical" evidence="2">
    <location>
        <begin position="320"/>
        <end position="340"/>
    </location>
</feature>
<feature type="transmembrane region" description="Helical" evidence="2">
    <location>
        <begin position="347"/>
        <end position="367"/>
    </location>
</feature>
<feature type="binding site" description="axial binding residue" evidence="2">
    <location>
        <position position="83"/>
    </location>
    <ligand>
        <name>heme b</name>
        <dbReference type="ChEBI" id="CHEBI:60344"/>
        <label>b562</label>
    </ligand>
    <ligandPart>
        <name>Fe</name>
        <dbReference type="ChEBI" id="CHEBI:18248"/>
    </ligandPart>
</feature>
<feature type="binding site" description="axial binding residue" evidence="2">
    <location>
        <position position="97"/>
    </location>
    <ligand>
        <name>heme b</name>
        <dbReference type="ChEBI" id="CHEBI:60344"/>
        <label>b566</label>
    </ligand>
    <ligandPart>
        <name>Fe</name>
        <dbReference type="ChEBI" id="CHEBI:18248"/>
    </ligandPart>
</feature>
<feature type="binding site" description="axial binding residue" evidence="2">
    <location>
        <position position="182"/>
    </location>
    <ligand>
        <name>heme b</name>
        <dbReference type="ChEBI" id="CHEBI:60344"/>
        <label>b562</label>
    </ligand>
    <ligandPart>
        <name>Fe</name>
        <dbReference type="ChEBI" id="CHEBI:18248"/>
    </ligandPart>
</feature>
<feature type="binding site" description="axial binding residue" evidence="2">
    <location>
        <position position="196"/>
    </location>
    <ligand>
        <name>heme b</name>
        <dbReference type="ChEBI" id="CHEBI:60344"/>
        <label>b566</label>
    </ligand>
    <ligandPart>
        <name>Fe</name>
        <dbReference type="ChEBI" id="CHEBI:18248"/>
    </ligandPart>
</feature>
<feature type="binding site" evidence="2">
    <location>
        <position position="201"/>
    </location>
    <ligand>
        <name>a ubiquinone</name>
        <dbReference type="ChEBI" id="CHEBI:16389"/>
    </ligand>
</feature>
<evidence type="ECO:0000250" key="1"/>
<evidence type="ECO:0000250" key="2">
    <source>
        <dbReference type="UniProtKB" id="P00157"/>
    </source>
</evidence>
<evidence type="ECO:0000255" key="3">
    <source>
        <dbReference type="PROSITE-ProRule" id="PRU00967"/>
    </source>
</evidence>
<evidence type="ECO:0000255" key="4">
    <source>
        <dbReference type="PROSITE-ProRule" id="PRU00968"/>
    </source>
</evidence>
<protein>
    <recommendedName>
        <fullName>Cytochrome b</fullName>
    </recommendedName>
    <alternativeName>
        <fullName>Complex III subunit 3</fullName>
    </alternativeName>
    <alternativeName>
        <fullName>Complex III subunit III</fullName>
    </alternativeName>
    <alternativeName>
        <fullName>Cytochrome b-c1 complex subunit 3</fullName>
    </alternativeName>
    <alternativeName>
        <fullName>Ubiquinol-cytochrome-c reductase complex cytochrome b subunit</fullName>
    </alternativeName>
</protein>
<accession>Q6WRH4</accession>
<proteinExistence type="inferred from homology"/>
<name>CYB_AKOMN</name>
<sequence>MKILRKNHPLLKIVNHSFIDLPTPSNISSWWNFGSLLGMCLVIQILTGLFLAMHYTSDTTTAFSSVAHICRDVNYGWLIRYLHANGASMFFICLFIHVGRGIYYGSYVLSETWNIGIILLLTTMATAFVGYVLPWGQMSFWGATVITNLLSAIPYIGNTLVEWIWGGFSVDKATLTRFFAFHFILPFIIAAFALVHLLFLHETGSNNPSGLNSDSDKIPFHPYYTTKDLLGIFLLLLVLMILALFFPDVLGDPDNFTPANPLNTPAHIKPEWYFLFAYAILRSIPNKLGGVLALVLSILILAAFPLLNTSKQHGLIFRPVTQVIYWIFIANLLVLTWIGGQPVEYPFTTIGQIASVTYFATIIILIPVSNTIENNIIKL</sequence>
<dbReference type="EMBL" id="AY273905">
    <property type="protein sequence ID" value="AAQ20022.1"/>
    <property type="molecule type" value="Genomic_DNA"/>
</dbReference>
<dbReference type="EMBL" id="AY195864">
    <property type="protein sequence ID" value="AAP34293.1"/>
    <property type="molecule type" value="Genomic_DNA"/>
</dbReference>
<dbReference type="SMR" id="Q6WRH4"/>
<dbReference type="GO" id="GO:0005743">
    <property type="term" value="C:mitochondrial inner membrane"/>
    <property type="evidence" value="ECO:0007669"/>
    <property type="project" value="UniProtKB-SubCell"/>
</dbReference>
<dbReference type="GO" id="GO:0045275">
    <property type="term" value="C:respiratory chain complex III"/>
    <property type="evidence" value="ECO:0007669"/>
    <property type="project" value="InterPro"/>
</dbReference>
<dbReference type="GO" id="GO:0046872">
    <property type="term" value="F:metal ion binding"/>
    <property type="evidence" value="ECO:0007669"/>
    <property type="project" value="UniProtKB-KW"/>
</dbReference>
<dbReference type="GO" id="GO:0008121">
    <property type="term" value="F:ubiquinol-cytochrome-c reductase activity"/>
    <property type="evidence" value="ECO:0007669"/>
    <property type="project" value="InterPro"/>
</dbReference>
<dbReference type="GO" id="GO:0006122">
    <property type="term" value="P:mitochondrial electron transport, ubiquinol to cytochrome c"/>
    <property type="evidence" value="ECO:0007669"/>
    <property type="project" value="TreeGrafter"/>
</dbReference>
<dbReference type="CDD" id="cd00290">
    <property type="entry name" value="cytochrome_b_C"/>
    <property type="match status" value="1"/>
</dbReference>
<dbReference type="CDD" id="cd00284">
    <property type="entry name" value="Cytochrome_b_N"/>
    <property type="match status" value="1"/>
</dbReference>
<dbReference type="FunFam" id="1.20.810.10:FF:000002">
    <property type="entry name" value="Cytochrome b"/>
    <property type="match status" value="1"/>
</dbReference>
<dbReference type="Gene3D" id="1.20.810.10">
    <property type="entry name" value="Cytochrome Bc1 Complex, Chain C"/>
    <property type="match status" value="1"/>
</dbReference>
<dbReference type="InterPro" id="IPR005798">
    <property type="entry name" value="Cyt_b/b6_C"/>
</dbReference>
<dbReference type="InterPro" id="IPR036150">
    <property type="entry name" value="Cyt_b/b6_C_sf"/>
</dbReference>
<dbReference type="InterPro" id="IPR005797">
    <property type="entry name" value="Cyt_b/b6_N"/>
</dbReference>
<dbReference type="InterPro" id="IPR027387">
    <property type="entry name" value="Cytb/b6-like_sf"/>
</dbReference>
<dbReference type="InterPro" id="IPR030689">
    <property type="entry name" value="Cytochrome_b"/>
</dbReference>
<dbReference type="InterPro" id="IPR048260">
    <property type="entry name" value="Cytochrome_b_C_euk/bac"/>
</dbReference>
<dbReference type="InterPro" id="IPR048259">
    <property type="entry name" value="Cytochrome_b_N_euk/bac"/>
</dbReference>
<dbReference type="InterPro" id="IPR016174">
    <property type="entry name" value="Di-haem_cyt_TM"/>
</dbReference>
<dbReference type="PANTHER" id="PTHR19271">
    <property type="entry name" value="CYTOCHROME B"/>
    <property type="match status" value="1"/>
</dbReference>
<dbReference type="PANTHER" id="PTHR19271:SF16">
    <property type="entry name" value="CYTOCHROME B"/>
    <property type="match status" value="1"/>
</dbReference>
<dbReference type="Pfam" id="PF00032">
    <property type="entry name" value="Cytochrom_B_C"/>
    <property type="match status" value="1"/>
</dbReference>
<dbReference type="Pfam" id="PF00033">
    <property type="entry name" value="Cytochrome_B"/>
    <property type="match status" value="1"/>
</dbReference>
<dbReference type="PIRSF" id="PIRSF038885">
    <property type="entry name" value="COB"/>
    <property type="match status" value="1"/>
</dbReference>
<dbReference type="SUPFAM" id="SSF81648">
    <property type="entry name" value="a domain/subunit of cytochrome bc1 complex (Ubiquinol-cytochrome c reductase)"/>
    <property type="match status" value="1"/>
</dbReference>
<dbReference type="SUPFAM" id="SSF81342">
    <property type="entry name" value="Transmembrane di-heme cytochromes"/>
    <property type="match status" value="1"/>
</dbReference>
<dbReference type="PROSITE" id="PS51003">
    <property type="entry name" value="CYTB_CTER"/>
    <property type="match status" value="1"/>
</dbReference>
<dbReference type="PROSITE" id="PS51002">
    <property type="entry name" value="CYTB_NTER"/>
    <property type="match status" value="1"/>
</dbReference>